<name>AUXCP_BPCA1</name>
<feature type="chain" id="PRO_0000458027" description="Auxiliary capsid protein">
    <location>
        <begin position="1"/>
        <end position="333"/>
    </location>
</feature>
<feature type="region of interest" description="FD" evidence="1">
    <location>
        <begin position="75"/>
        <end position="237"/>
    </location>
</feature>
<feature type="strand" evidence="6">
    <location>
        <begin position="10"/>
        <end position="13"/>
    </location>
</feature>
<feature type="strand" evidence="6">
    <location>
        <begin position="15"/>
        <end position="17"/>
    </location>
</feature>
<feature type="helix" evidence="6">
    <location>
        <begin position="21"/>
        <end position="23"/>
    </location>
</feature>
<feature type="strand" evidence="6">
    <location>
        <begin position="29"/>
        <end position="34"/>
    </location>
</feature>
<feature type="strand" evidence="6">
    <location>
        <begin position="40"/>
        <end position="46"/>
    </location>
</feature>
<feature type="strand" evidence="6">
    <location>
        <begin position="48"/>
        <end position="53"/>
    </location>
</feature>
<feature type="strand" evidence="6">
    <location>
        <begin position="61"/>
        <end position="67"/>
    </location>
</feature>
<feature type="strand" evidence="6">
    <location>
        <begin position="79"/>
        <end position="82"/>
    </location>
</feature>
<feature type="helix" evidence="6">
    <location>
        <begin position="86"/>
        <end position="89"/>
    </location>
</feature>
<feature type="strand" evidence="6">
    <location>
        <begin position="97"/>
        <end position="102"/>
    </location>
</feature>
<feature type="strand" evidence="6">
    <location>
        <begin position="104"/>
        <end position="106"/>
    </location>
</feature>
<feature type="strand" evidence="7">
    <location>
        <begin position="108"/>
        <end position="111"/>
    </location>
</feature>
<feature type="strand" evidence="6">
    <location>
        <begin position="119"/>
        <end position="123"/>
    </location>
</feature>
<feature type="helix" evidence="6">
    <location>
        <begin position="130"/>
        <end position="145"/>
    </location>
</feature>
<feature type="strand" evidence="6">
    <location>
        <begin position="149"/>
        <end position="151"/>
    </location>
</feature>
<feature type="strand" evidence="6">
    <location>
        <begin position="154"/>
        <end position="161"/>
    </location>
</feature>
<feature type="turn" evidence="6">
    <location>
        <begin position="162"/>
        <end position="164"/>
    </location>
</feature>
<feature type="strand" evidence="6">
    <location>
        <begin position="169"/>
        <end position="171"/>
    </location>
</feature>
<feature type="turn" evidence="6">
    <location>
        <begin position="177"/>
        <end position="179"/>
    </location>
</feature>
<feature type="strand" evidence="6">
    <location>
        <begin position="185"/>
        <end position="191"/>
    </location>
</feature>
<feature type="strand" evidence="6">
    <location>
        <begin position="199"/>
        <end position="202"/>
    </location>
</feature>
<feature type="strand" evidence="6">
    <location>
        <begin position="211"/>
        <end position="213"/>
    </location>
</feature>
<feature type="strand" evidence="6">
    <location>
        <begin position="216"/>
        <end position="223"/>
    </location>
</feature>
<feature type="strand" evidence="6">
    <location>
        <begin position="229"/>
        <end position="231"/>
    </location>
</feature>
<feature type="helix" evidence="6">
    <location>
        <begin position="240"/>
        <end position="250"/>
    </location>
</feature>
<feature type="turn" evidence="6">
    <location>
        <begin position="251"/>
        <end position="254"/>
    </location>
</feature>
<feature type="turn" evidence="6">
    <location>
        <begin position="261"/>
        <end position="264"/>
    </location>
</feature>
<feature type="strand" evidence="6">
    <location>
        <begin position="279"/>
        <end position="288"/>
    </location>
</feature>
<feature type="strand" evidence="6">
    <location>
        <begin position="298"/>
        <end position="307"/>
    </location>
</feature>
<feature type="helix" evidence="6">
    <location>
        <begin position="313"/>
        <end position="326"/>
    </location>
</feature>
<comment type="function">
    <text evidence="1">Auxiliary capsid protein that forms an outer layer on the major capsid protein protrusions.</text>
</comment>
<comment type="subunit">
    <text evidence="1">Interacts (via FD region) with the major capsid protein.</text>
</comment>
<comment type="subcellular location">
    <subcellularLocation>
        <location evidence="1">Virion</location>
    </subcellularLocation>
    <text evidence="1">Present in 535 copies in the virion.</text>
</comment>
<comment type="domain">
    <text evidence="4">The central region FD is structurally similar to Helicobacter pylori flagellar cap protein FliD.</text>
</comment>
<sequence>MVISINQVRQLYVAKALKANTAALTTAGDIVPKADTAKTTLYFQSMSPAGIVASDKINLKHVLYAKATPSEALAHKLVRYSVTLDADVSATPVAGQNYILRLAFRQYIGLSEEDQYFKYGEVIARSGMTASDFYKKMAISLAKNLENKTESTPLVNIYLISAAAASTDVPVTSATKESDLTATDYNQIIIEETEQPWVLGMMPQAFIPFTPQFLTITVDGEDRLWGVATVVTPTKTVPDGHLIADLEYFCMGARGDIYRGMGYPNIIKTTYLVDPGAVYDVLDIHYFYTGSNESVQKSEKTITLVAVDDGSHTAMNALIGAINTASGLTIATL</sequence>
<reference key="1">
    <citation type="journal article" date="2018" name="Nat. Commun.">
        <title>PhiCrAss001 represents the most abundant bacteriophage family in the human gut and infects Bacteroides intestinalis.</title>
        <authorList>
            <person name="Shkoporov A.N."/>
            <person name="Khokhlova E.V."/>
            <person name="Fitzgerald C.B."/>
            <person name="Stockdale S.R."/>
            <person name="Draper L.A."/>
            <person name="Ross R.P."/>
            <person name="Hill C."/>
        </authorList>
    </citation>
    <scope>NUCLEOTIDE SEQUENCE [LARGE SCALE GENOMIC DNA]</scope>
</reference>
<reference key="2">
    <citation type="journal article" date="2023" name="Nature">
        <title>Structural atlas of a human gut crassvirus.</title>
        <authorList>
            <person name="Bayfield O.W."/>
            <person name="Shkoporov A.N."/>
            <person name="Yutin N."/>
            <person name="Khokhlova E.V."/>
            <person name="Smith J.L.R."/>
            <person name="Hawkins D.E.D.P."/>
            <person name="Koonin E.V."/>
            <person name="Hill C."/>
            <person name="Antson A.A."/>
        </authorList>
    </citation>
    <scope>SUBCELLULAR LOCATION</scope>
    <scope>FUNCTION</scope>
    <scope>DOMAIN</scope>
    <scope>INTERACTION WITH THE MAJOR CAPSID PROTEIN</scope>
</reference>
<organism>
    <name type="scientific">Bacteroides phage crAss001</name>
    <name type="common">Bacteroides phage PhiCrAss001</name>
    <dbReference type="NCBI Taxonomy" id="2301731"/>
    <lineage>
        <taxon>Viruses</taxon>
        <taxon>Duplodnaviria</taxon>
        <taxon>Heunggongvirae</taxon>
        <taxon>Uroviricota</taxon>
        <taxon>Caudoviricetes</taxon>
        <taxon>Crassvirales</taxon>
        <taxon>Steigviridae</taxon>
        <taxon>Asinivirinae</taxon>
        <taxon>Kehishuvirus</taxon>
        <taxon>Kehishuvirus primarius</taxon>
    </lineage>
</organism>
<evidence type="ECO:0000269" key="1">
    <source>
    </source>
</evidence>
<evidence type="ECO:0000303" key="2">
    <source>
    </source>
</evidence>
<evidence type="ECO:0000303" key="3">
    <source>
    </source>
</evidence>
<evidence type="ECO:0000305" key="4">
    <source>
    </source>
</evidence>
<evidence type="ECO:0000312" key="5">
    <source>
        <dbReference type="EMBL" id="AXQ62679.1"/>
    </source>
</evidence>
<evidence type="ECO:0007829" key="6">
    <source>
        <dbReference type="PDB" id="7QOF"/>
    </source>
</evidence>
<evidence type="ECO:0007829" key="7">
    <source>
        <dbReference type="PDB" id="7QOH"/>
    </source>
</evidence>
<keyword id="KW-0002">3D-structure</keyword>
<keyword id="KW-1232">Capsid decoration protein</keyword>
<keyword id="KW-0167">Capsid protein</keyword>
<keyword id="KW-1185">Reference proteome</keyword>
<keyword id="KW-0946">Virion</keyword>
<accession>A0A385DVS7</accession>
<proteinExistence type="evidence at protein level"/>
<organismHost>
    <name type="scientific">Bacteroides intestinalis</name>
    <dbReference type="NCBI Taxonomy" id="329854"/>
</organismHost>
<gene>
    <name evidence="5" type="ORF">crAss001_36</name>
</gene>
<dbReference type="EMBL" id="MH675552">
    <property type="protein sequence ID" value="AXQ62679.1"/>
    <property type="molecule type" value="Genomic_DNA"/>
</dbReference>
<dbReference type="PDB" id="7QOF">
    <property type="method" value="EM"/>
    <property type="resolution" value="3.01 A"/>
    <property type="chains" value="a/b/c/d/e/f/g/h/i=1-333"/>
</dbReference>
<dbReference type="PDB" id="7QOH">
    <property type="method" value="EM"/>
    <property type="resolution" value="3.32 A"/>
    <property type="chains" value="a/b/d/e/f=1-333"/>
</dbReference>
<dbReference type="PDB" id="7QOI">
    <property type="method" value="EM"/>
    <property type="resolution" value="3.62 A"/>
    <property type="chains" value="Aa/Ab/Ad/Ae/Af/Ba/Bb/Bd/Be/Bf/Ca/Cb/Cd/Ce/Cf/Da/Db/Dd/De/Df/Ea/Eb/Ed/Ee/Ef=1-333"/>
</dbReference>
<dbReference type="PDB" id="8CKB">
    <property type="method" value="EM"/>
    <property type="resolution" value="4.39 A"/>
    <property type="chains" value="A001/A002/A003/A004/A005/A006/A007/A008/A009/A010/A011/A012/A013/A014/A015/A016/A017/A018/A019/A020/A021/A022/A023/A024/A025/A026/A027/A028/A029/A030=1-333"/>
</dbReference>
<dbReference type="PDBsum" id="7QOF"/>
<dbReference type="PDBsum" id="7QOH"/>
<dbReference type="PDBsum" id="7QOI"/>
<dbReference type="PDBsum" id="8CKB"/>
<dbReference type="EMDB" id="EMD-14088"/>
<dbReference type="EMDB" id="EMD-14090"/>
<dbReference type="EMDB" id="EMD-14091"/>
<dbReference type="SMR" id="A0A385DVS7"/>
<dbReference type="Proteomes" id="UP000262320">
    <property type="component" value="Genome"/>
</dbReference>
<dbReference type="GO" id="GO:0098021">
    <property type="term" value="C:viral capsid, decoration"/>
    <property type="evidence" value="ECO:0007669"/>
    <property type="project" value="UniProtKB-KW"/>
</dbReference>
<protein>
    <recommendedName>
        <fullName evidence="3">Auxiliary capsid protein</fullName>
    </recommendedName>
    <alternativeName>
        <fullName evidence="2">Gene product 36</fullName>
        <shortName evidence="2">gp36</shortName>
    </alternativeName>
</protein>